<comment type="function">
    <text evidence="1">Alpha-conotoxins act on postsynaptic membranes, they bind to the nicotinic acetylcholine receptors (nAChR) and thus inhibit them.</text>
</comment>
<comment type="subcellular location">
    <subcellularLocation>
        <location evidence="4">Secreted</location>
    </subcellularLocation>
</comment>
<comment type="tissue specificity">
    <text evidence="5">Expressed by the venom duct.</text>
</comment>
<comment type="domain">
    <text evidence="4">The cysteine framework is I (CC-C-C). Alpha4/5 pattern.</text>
</comment>
<comment type="similarity">
    <text evidence="4">Belongs to the conotoxin A superfamily.</text>
</comment>
<protein>
    <recommendedName>
        <fullName>Alpha-conotoxin-like Ca1.1</fullName>
    </recommendedName>
</protein>
<accession>P0C1V9</accession>
<organism>
    <name type="scientific">Conus caracteristicus</name>
    <name type="common">Characteristic cone</name>
    <dbReference type="NCBI Taxonomy" id="89440"/>
    <lineage>
        <taxon>Eukaryota</taxon>
        <taxon>Metazoa</taxon>
        <taxon>Spiralia</taxon>
        <taxon>Lophotrochozoa</taxon>
        <taxon>Mollusca</taxon>
        <taxon>Gastropoda</taxon>
        <taxon>Caenogastropoda</taxon>
        <taxon>Neogastropoda</taxon>
        <taxon>Conoidea</taxon>
        <taxon>Conidae</taxon>
        <taxon>Conus</taxon>
    </lineage>
</organism>
<proteinExistence type="inferred from homology"/>
<sequence length="62" mass="6827">MGMRMMFTVFLLVVLATTVVSFTSDRASDGRNAAANAFDLIALIARQNCCSIPSCWEKYKCS</sequence>
<name>CA11_CONCB</name>
<feature type="signal peptide" evidence="3">
    <location>
        <begin position="1"/>
        <end position="21"/>
    </location>
</feature>
<feature type="propeptide" id="PRO_0000249783" evidence="1">
    <location>
        <begin position="22"/>
        <end position="46"/>
    </location>
</feature>
<feature type="peptide" id="PRO_0000249784" description="Alpha-conotoxin-like Ca1.1">
    <location>
        <begin position="47"/>
        <end position="62"/>
    </location>
</feature>
<feature type="modified residue" description="Pyrrolidone carboxylic acid" evidence="1">
    <location>
        <position position="47"/>
    </location>
</feature>
<feature type="disulfide bond" evidence="2">
    <location>
        <begin position="49"/>
        <end position="55"/>
    </location>
</feature>
<feature type="disulfide bond" evidence="2">
    <location>
        <begin position="50"/>
        <end position="61"/>
    </location>
</feature>
<keyword id="KW-0008">Acetylcholine receptor inhibiting toxin</keyword>
<keyword id="KW-1015">Disulfide bond</keyword>
<keyword id="KW-0872">Ion channel impairing toxin</keyword>
<keyword id="KW-0528">Neurotoxin</keyword>
<keyword id="KW-0629">Postsynaptic neurotoxin</keyword>
<keyword id="KW-0873">Pyrrolidone carboxylic acid</keyword>
<keyword id="KW-0964">Secreted</keyword>
<keyword id="KW-0732">Signal</keyword>
<keyword id="KW-0800">Toxin</keyword>
<dbReference type="ConoServer" id="11">
    <property type="toxin name" value="Ca1.1 precursor"/>
</dbReference>
<dbReference type="GO" id="GO:0005576">
    <property type="term" value="C:extracellular region"/>
    <property type="evidence" value="ECO:0007669"/>
    <property type="project" value="UniProtKB-SubCell"/>
</dbReference>
<dbReference type="GO" id="GO:0035792">
    <property type="term" value="C:host cell postsynaptic membrane"/>
    <property type="evidence" value="ECO:0007669"/>
    <property type="project" value="UniProtKB-KW"/>
</dbReference>
<dbReference type="GO" id="GO:0030550">
    <property type="term" value="F:acetylcholine receptor inhibitor activity"/>
    <property type="evidence" value="ECO:0007669"/>
    <property type="project" value="UniProtKB-KW"/>
</dbReference>
<dbReference type="GO" id="GO:0099106">
    <property type="term" value="F:ion channel regulator activity"/>
    <property type="evidence" value="ECO:0007669"/>
    <property type="project" value="UniProtKB-KW"/>
</dbReference>
<dbReference type="GO" id="GO:0090729">
    <property type="term" value="F:toxin activity"/>
    <property type="evidence" value="ECO:0007669"/>
    <property type="project" value="UniProtKB-KW"/>
</dbReference>
<dbReference type="InterPro" id="IPR009958">
    <property type="entry name" value="Conotoxin_a-typ"/>
</dbReference>
<dbReference type="Pfam" id="PF07365">
    <property type="entry name" value="Toxin_8"/>
    <property type="match status" value="1"/>
</dbReference>
<evidence type="ECO:0000250" key="1"/>
<evidence type="ECO:0000250" key="2">
    <source>
        <dbReference type="UniProtKB" id="P69657"/>
    </source>
</evidence>
<evidence type="ECO:0000255" key="3"/>
<evidence type="ECO:0000305" key="4"/>
<evidence type="ECO:0000305" key="5">
    <source>
    </source>
</evidence>
<reference key="1">
    <citation type="journal article" date="2004" name="J. Biol. Chem.">
        <title>The A-superfamily of conotoxins: structural and functional divergence.</title>
        <authorList>
            <person name="Santos A.D."/>
            <person name="McIntosh J.M."/>
            <person name="Hillyard D.R."/>
            <person name="Cruz L.J."/>
            <person name="Olivera B.M."/>
        </authorList>
    </citation>
    <scope>NUCLEOTIDE SEQUENCE [MRNA]</scope>
    <source>
        <tissue>Venom duct</tissue>
    </source>
</reference>